<evidence type="ECO:0000250" key="1"/>
<evidence type="ECO:0000255" key="2">
    <source>
        <dbReference type="PROSITE-ProRule" id="PRU01258"/>
    </source>
</evidence>
<evidence type="ECO:0000269" key="3">
    <source>
    </source>
</evidence>
<evidence type="ECO:0000269" key="4">
    <source>
    </source>
</evidence>
<evidence type="ECO:0000269" key="5">
    <source>
    </source>
</evidence>
<evidence type="ECO:0000305" key="6"/>
<evidence type="ECO:0007829" key="7">
    <source>
        <dbReference type="PDB" id="1XRV"/>
    </source>
</evidence>
<evidence type="ECO:0007829" key="8">
    <source>
        <dbReference type="PDB" id="1ZB5"/>
    </source>
</evidence>
<organism>
    <name type="scientific">Sus scrofa</name>
    <name type="common">Pig</name>
    <dbReference type="NCBI Taxonomy" id="9823"/>
    <lineage>
        <taxon>Eukaryota</taxon>
        <taxon>Metazoa</taxon>
        <taxon>Chordata</taxon>
        <taxon>Craniata</taxon>
        <taxon>Vertebrata</taxon>
        <taxon>Euteleostomi</taxon>
        <taxon>Mammalia</taxon>
        <taxon>Eutheria</taxon>
        <taxon>Laurasiatheria</taxon>
        <taxon>Artiodactyla</taxon>
        <taxon>Suina</taxon>
        <taxon>Suidae</taxon>
        <taxon>Sus</taxon>
    </lineage>
</organism>
<proteinExistence type="evidence at protein level"/>
<keyword id="KW-0002">3D-structure</keyword>
<keyword id="KW-0929">Antimicrobial</keyword>
<keyword id="KW-0053">Apoptosis</keyword>
<keyword id="KW-0963">Cytoplasm</keyword>
<keyword id="KW-0903">Direct protein sequencing</keyword>
<keyword id="KW-1015">Disulfide bond</keyword>
<keyword id="KW-0256">Endoplasmic reticulum</keyword>
<keyword id="KW-0325">Glycoprotein</keyword>
<keyword id="KW-0395">Inflammatory response</keyword>
<keyword id="KW-0430">Lectin</keyword>
<keyword id="KW-1185">Reference proteome</keyword>
<keyword id="KW-0964">Secreted</keyword>
<keyword id="KW-0732">Signal</keyword>
<comment type="function">
    <text evidence="1 3">Carbohydrate-binding lectin with a preference for chitin. Has no chitinase activity. May play a role in tissue remodeling and in the capacity of cells to respond to and cope with changes in their environment. Plays a role in T-helper cell type 2 (Th2) inflammatory response and IL-13-induced inflammation, regulating allergen sensitization, inflammatory cell apoptosis, dendritic cell accumulation and M2 macrophage differentiation. Facilitates invasion of pathogenic enteric bacteria into colonic mucosa and lymphoid organs. Mediates activation of AKT1 signaling pathway and subsequent IL8 production in colonic epithelial cells. Regulates antibacterial responses in lung by contributing to macrophage bacterial killing, controlling bacterial dissemination and augmenting host tolerance. Also regulates hyperoxia-induced injury, inflammation and epithelial apoptosis in lung (By similarity). Stimulates migration and adhesion of cultured vascular smooth muscle cells.</text>
</comment>
<comment type="subunit">
    <text evidence="1">Monomer.</text>
</comment>
<comment type="subcellular location">
    <subcellularLocation>
        <location evidence="4 5">Secreted</location>
        <location evidence="4 5">Extracellular space</location>
    </subcellularLocation>
    <subcellularLocation>
        <location evidence="1">Cytoplasm</location>
    </subcellularLocation>
    <subcellularLocation>
        <location evidence="1">Cytoplasm</location>
        <location evidence="1">Perinuclear region</location>
    </subcellularLocation>
    <subcellularLocation>
        <location evidence="1">Endoplasmic reticulum</location>
    </subcellularLocation>
</comment>
<comment type="tissue specificity">
    <text evidence="3 5">Detected in smooth muscle cells in atherosclerotic plaques. Detected in regions of vascular occlusion in the aorta.</text>
</comment>
<comment type="induction">
    <text evidence="5">Up-regulated in cultured aortic smooth muscle cells upon transition to a nodular, multilayered culture.</text>
</comment>
<comment type="similarity">
    <text evidence="6">Belongs to the glycosyl hydrolase 18 family.</text>
</comment>
<comment type="caution">
    <text evidence="6">Although it belongs to the glycosyl hydrolase 18 family, Leu-140 is present instead of the conserved Glu which is an active site residue. Therefore this protein lacks chitinase activity.</text>
</comment>
<comment type="sequence caution" evidence="6">
    <conflict type="miscellaneous discrepancy">
        <sequence resource="EMBL-CDS" id="AAV30548"/>
    </conflict>
    <text>Sequencing errors.</text>
</comment>
<gene>
    <name type="primary">CHI3L1</name>
</gene>
<feature type="signal peptide" evidence="5">
    <location>
        <begin position="1"/>
        <end position="21"/>
    </location>
</feature>
<feature type="chain" id="PRO_0000011967" description="Chitinase-3-like protein 1">
    <location>
        <begin position="22"/>
        <end position="383"/>
    </location>
</feature>
<feature type="domain" description="GH18" evidence="2">
    <location>
        <begin position="22"/>
        <end position="383"/>
    </location>
</feature>
<feature type="region of interest" description="Important for AKT1 activation and IL8 production" evidence="1">
    <location>
        <begin position="324"/>
        <end position="338"/>
    </location>
</feature>
<feature type="binding site" evidence="2">
    <location>
        <begin position="70"/>
        <end position="71"/>
    </location>
    <ligand>
        <name>chitin</name>
        <dbReference type="ChEBI" id="CHEBI:17029"/>
    </ligand>
</feature>
<feature type="binding site" evidence="2">
    <location>
        <begin position="97"/>
        <end position="100"/>
    </location>
    <ligand>
        <name>chitin</name>
        <dbReference type="ChEBI" id="CHEBI:17029"/>
    </ligand>
</feature>
<feature type="binding site" evidence="2">
    <location>
        <position position="141"/>
    </location>
    <ligand>
        <name>chitin</name>
        <dbReference type="ChEBI" id="CHEBI:17029"/>
    </ligand>
</feature>
<feature type="binding site" evidence="2">
    <location>
        <begin position="204"/>
        <end position="207"/>
    </location>
    <ligand>
        <name>chitin</name>
        <dbReference type="ChEBI" id="CHEBI:17029"/>
    </ligand>
</feature>
<feature type="binding site" evidence="1">
    <location>
        <position position="263"/>
    </location>
    <ligand>
        <name>chitin</name>
        <dbReference type="ChEBI" id="CHEBI:17029"/>
    </ligand>
</feature>
<feature type="binding site" evidence="2">
    <location>
        <position position="352"/>
    </location>
    <ligand>
        <name>chitin</name>
        <dbReference type="ChEBI" id="CHEBI:17029"/>
    </ligand>
</feature>
<feature type="glycosylation site" description="N-linked (GlcNAc...) asparagine" evidence="4">
    <location>
        <position position="60"/>
    </location>
</feature>
<feature type="disulfide bond" evidence="2">
    <location>
        <begin position="26"/>
        <end position="51"/>
    </location>
</feature>
<feature type="disulfide bond">
    <location>
        <begin position="300"/>
        <end position="364"/>
    </location>
</feature>
<feature type="sequence conflict" description="In Ref. 1; AAA86482/CAA87764." evidence="6" ref="1">
    <original>W</original>
    <variation>L</variation>
    <location>
        <position position="69"/>
    </location>
</feature>
<feature type="sequence conflict" description="In Ref. 1; AAA86482/CAA87764." evidence="6" ref="1">
    <original>K</original>
    <variation>N</variation>
    <location>
        <position position="112"/>
    </location>
</feature>
<feature type="sequence conflict" description="In Ref. 1; AAA86482/CAA87764." evidence="6" ref="1">
    <original>LY</original>
    <variation>IS</variation>
    <location>
        <begin position="140"/>
        <end position="141"/>
    </location>
</feature>
<feature type="sequence conflict" description="In Ref. 1; AAA86482/CAA87764." evidence="6" ref="1">
    <original>I</original>
    <variation>V</variation>
    <location>
        <position position="162"/>
    </location>
</feature>
<feature type="sequence conflict" description="In Ref. 1; AAA86482/CAA87764." evidence="6" ref="1">
    <original>QA</original>
    <variation>LP</variation>
    <location>
        <begin position="166"/>
        <end position="167"/>
    </location>
</feature>
<feature type="sequence conflict" description="In Ref. 1; AAA86482/CAA87764." evidence="6" ref="1">
    <original>Q</original>
    <variation>R</variation>
    <location>
        <position position="171"/>
    </location>
</feature>
<feature type="sequence conflict" description="In Ref. 1; AAA86482/CAA87764." evidence="6" ref="1">
    <original>A</original>
    <variation>G</variation>
    <location>
        <position position="176"/>
    </location>
</feature>
<feature type="sequence conflict" description="In Ref. 1; AAA86482/CAA87764." evidence="6" ref="1">
    <original>E</original>
    <variation>G</variation>
    <location>
        <position position="227"/>
    </location>
</feature>
<feature type="sequence conflict" description="In Ref. 1; AAA86482/CAA87764." evidence="6" ref="1">
    <original>V</original>
    <variation>A</variation>
    <location>
        <position position="278"/>
    </location>
</feature>
<feature type="sequence conflict" description="In Ref. 1; AAA86482." evidence="6" ref="1">
    <original>THRFRD</original>
    <variation>VRRPLG</variation>
    <location>
        <begin position="308"/>
        <end position="313"/>
    </location>
</feature>
<feature type="sequence conflict" description="In Ref. 1; AAA86482/CAA87764." evidence="6" ref="1">
    <original>A</original>
    <variation>T</variation>
    <location>
        <position position="353"/>
    </location>
</feature>
<feature type="strand" evidence="7">
    <location>
        <begin position="23"/>
        <end position="29"/>
    </location>
</feature>
<feature type="helix" evidence="7">
    <location>
        <begin position="30"/>
        <end position="34"/>
    </location>
</feature>
<feature type="helix" evidence="7">
    <location>
        <begin position="37"/>
        <end position="39"/>
    </location>
</feature>
<feature type="helix" evidence="7">
    <location>
        <begin position="43"/>
        <end position="45"/>
    </location>
</feature>
<feature type="turn" evidence="7">
    <location>
        <begin position="48"/>
        <end position="50"/>
    </location>
</feature>
<feature type="strand" evidence="7">
    <location>
        <begin position="52"/>
        <end position="62"/>
    </location>
</feature>
<feature type="strand" evidence="7">
    <location>
        <begin position="65"/>
        <end position="67"/>
    </location>
</feature>
<feature type="helix" evidence="7">
    <location>
        <begin position="73"/>
        <end position="81"/>
    </location>
</feature>
<feature type="helix" evidence="7">
    <location>
        <begin position="82"/>
        <end position="85"/>
    </location>
</feature>
<feature type="strand" evidence="7">
    <location>
        <begin position="91"/>
        <end position="97"/>
    </location>
</feature>
<feature type="helix" evidence="7">
    <location>
        <begin position="103"/>
        <end position="111"/>
    </location>
</feature>
<feature type="helix" evidence="7">
    <location>
        <begin position="113"/>
        <end position="130"/>
    </location>
</feature>
<feature type="strand" evidence="7">
    <location>
        <begin position="133"/>
        <end position="138"/>
    </location>
</feature>
<feature type="turn" evidence="7">
    <location>
        <begin position="144"/>
        <end position="146"/>
    </location>
</feature>
<feature type="helix" evidence="7">
    <location>
        <begin position="147"/>
        <end position="164"/>
    </location>
</feature>
<feature type="helix" evidence="7">
    <location>
        <begin position="165"/>
        <end position="167"/>
    </location>
</feature>
<feature type="strand" evidence="7">
    <location>
        <begin position="173"/>
        <end position="178"/>
    </location>
</feature>
<feature type="helix" evidence="7">
    <location>
        <begin position="182"/>
        <end position="188"/>
    </location>
</feature>
<feature type="helix" evidence="7">
    <location>
        <begin position="191"/>
        <end position="195"/>
    </location>
</feature>
<feature type="strand" evidence="7">
    <location>
        <begin position="199"/>
        <end position="203"/>
    </location>
</feature>
<feature type="strand" evidence="7">
    <location>
        <begin position="213"/>
        <end position="215"/>
    </location>
</feature>
<feature type="strand" evidence="8">
    <location>
        <begin position="233"/>
        <end position="236"/>
    </location>
</feature>
<feature type="helix" evidence="7">
    <location>
        <begin position="237"/>
        <end position="247"/>
    </location>
</feature>
<feature type="helix" evidence="7">
    <location>
        <begin position="251"/>
        <end position="253"/>
    </location>
</feature>
<feature type="strand" evidence="7">
    <location>
        <begin position="254"/>
        <end position="270"/>
    </location>
</feature>
<feature type="strand" evidence="7">
    <location>
        <begin position="277"/>
        <end position="281"/>
    </location>
</feature>
<feature type="turn" evidence="7">
    <location>
        <begin position="286"/>
        <end position="288"/>
    </location>
</feature>
<feature type="strand" evidence="7">
    <location>
        <begin position="293"/>
        <end position="295"/>
    </location>
</feature>
<feature type="helix" evidence="7">
    <location>
        <begin position="296"/>
        <end position="303"/>
    </location>
</feature>
<feature type="strand" evidence="7">
    <location>
        <begin position="307"/>
        <end position="311"/>
    </location>
</feature>
<feature type="turn" evidence="7">
    <location>
        <begin position="312"/>
        <end position="315"/>
    </location>
</feature>
<feature type="strand" evidence="7">
    <location>
        <begin position="316"/>
        <end position="321"/>
    </location>
</feature>
<feature type="strand" evidence="7">
    <location>
        <begin position="324"/>
        <end position="327"/>
    </location>
</feature>
<feature type="helix" evidence="7">
    <location>
        <begin position="331"/>
        <end position="343"/>
    </location>
</feature>
<feature type="strand" evidence="7">
    <location>
        <begin position="347"/>
        <end position="352"/>
    </location>
</feature>
<feature type="turn" evidence="7">
    <location>
        <begin position="354"/>
        <end position="356"/>
    </location>
</feature>
<feature type="strand" evidence="7">
    <location>
        <begin position="359"/>
        <end position="361"/>
    </location>
</feature>
<feature type="strand" evidence="7">
    <location>
        <begin position="363"/>
        <end position="367"/>
    </location>
</feature>
<feature type="helix" evidence="7">
    <location>
        <begin position="371"/>
        <end position="381"/>
    </location>
</feature>
<sequence>MGLRVAQTGFVALVLLQSCAAYKLVCYYTSWSQYREGDGSCFPDAIDPFLCTHIIYSFANISNNEIDTWEWNDVTLYDTLNTLKNRNPNLKTLLSVGGWNFGSQRFSKIASKTQSRRTFIKSVPPFLRTHGFDGLDLAWLYPGRRDKRHLTTLVKEMKAEFIREAQAGTEQLLLSAAVSAGKVAIDRGYDIAQISQHLDFISLLTYDFHGAWRQTTGHHSPLFRGQEDASSDRFSNADYAVSYVLRLGAPANKLVMGIPTFGRSFTLASSKTDVGAPVSGPGIPGRFTKEKGILAYYEICDFLQGATTHRFRDQQVPYATKGNQWVGYDDQESVKNKAKYLKSRQLAGAMVWALDLDDFRGNFCGQNLRFPLTSAIKDVLAAA</sequence>
<protein>
    <recommendedName>
        <fullName>Chitinase-3-like protein 1</fullName>
    </recommendedName>
    <alternativeName>
        <fullName>38 kDa heparin-binding glycoprotein</fullName>
    </alternativeName>
    <alternativeName>
        <fullName>Signal-processing protein</fullName>
    </alternativeName>
    <alternativeName>
        <fullName>gp38k</fullName>
    </alternativeName>
</protein>
<accession>Q29411</accession>
<accession>Q5UC99</accession>
<name>CH3L1_PIG</name>
<reference key="1">
    <citation type="journal article" date="1995" name="J. Biol. Chem.">
        <title>Identification of a 38-kDa heparin-binding glycoprotein (gp38k) in differentiating vascular smooth muscle cells as a member of a group of proteins associated with tissue remodeling.</title>
        <authorList>
            <person name="Shackelton L.M."/>
            <person name="Mann D.M."/>
            <person name="Millis A.J.T."/>
        </authorList>
    </citation>
    <scope>NUCLEOTIDE SEQUENCE [MRNA]</scope>
    <scope>PROTEIN SEQUENCE OF 22-36; 92-105; 183-201; 272-278; 292-206 AND 343-362</scope>
    <scope>INDUCTION</scope>
    <scope>SUBCELLULAR LOCATION</scope>
    <scope>TISSUE SPECIFICITY</scope>
    <source>
        <tissue>Smooth muscle</tissue>
    </source>
</reference>
<reference key="2">
    <citation type="submission" date="2004-09" db="EMBL/GenBank/DDBJ databases">
        <title>Crystal structure of a porcine 40 kDa signalling protein at 2.89A resolution.</title>
        <authorList>
            <person name="Baskar Singh S."/>
            <person name="Srivastava D.B."/>
            <person name="Ethayathulla A.S."/>
            <person name="Sharma S."/>
            <person name="Srinivasan A."/>
            <person name="Singh T.P."/>
        </authorList>
    </citation>
    <scope>NUCLEOTIDE SEQUENCE [MRNA] OF 22-383</scope>
    <scope>X-RAY CRYSTALLOGRAPHY (2.1 ANGSTROMS) OF 22-383</scope>
    <source>
        <tissue>Mammary gland</tissue>
    </source>
</reference>
<reference key="3">
    <citation type="journal article" date="1986" name="J. Cell. Physiol.">
        <title>In vitro expression of a 38,000 dalton heparin-binding glycoprotein by morphologically differentiated smooth muscle cells.</title>
        <authorList>
            <person name="Millis A.J.T."/>
            <person name="Hoyle M."/>
            <person name="Kent L."/>
        </authorList>
    </citation>
    <scope>GLYCOSYLATION</scope>
    <scope>SUBCELLULAR LOCATION</scope>
</reference>
<reference key="4">
    <citation type="journal article" date="2003" name="Exp. Cell Res.">
        <title>gp38k (CHI3L1) is a novel adhesion and migration factor for vascular cells.</title>
        <authorList>
            <person name="Nishikawa K.C."/>
            <person name="Millis A.J.T."/>
        </authorList>
    </citation>
    <scope>FUNCTION</scope>
    <scope>TISSUE SPECIFICITY</scope>
</reference>
<dbReference type="EMBL" id="U19900">
    <property type="protein sequence ID" value="AAA86482.1"/>
    <property type="molecule type" value="mRNA"/>
</dbReference>
<dbReference type="EMBL" id="Z47803">
    <property type="protein sequence ID" value="CAA87764.1"/>
    <property type="molecule type" value="mRNA"/>
</dbReference>
<dbReference type="EMBL" id="AY762599">
    <property type="protein sequence ID" value="AAV30548.1"/>
    <property type="status" value="ALT_SEQ"/>
    <property type="molecule type" value="mRNA"/>
</dbReference>
<dbReference type="PIR" id="S51327">
    <property type="entry name" value="S51327"/>
</dbReference>
<dbReference type="RefSeq" id="NP_001001540.1">
    <property type="nucleotide sequence ID" value="NM_001001540.1"/>
</dbReference>
<dbReference type="PDB" id="1XHG">
    <property type="method" value="X-ray"/>
    <property type="resolution" value="2.90 A"/>
    <property type="chains" value="A=22-381"/>
</dbReference>
<dbReference type="PDB" id="1XRV">
    <property type="method" value="X-ray"/>
    <property type="resolution" value="2.10 A"/>
    <property type="chains" value="A=22-381"/>
</dbReference>
<dbReference type="PDB" id="1ZB5">
    <property type="method" value="X-ray"/>
    <property type="resolution" value="2.45 A"/>
    <property type="chains" value="A=22-381"/>
</dbReference>
<dbReference type="PDB" id="1ZBC">
    <property type="method" value="X-ray"/>
    <property type="resolution" value="2.29 A"/>
    <property type="chains" value="A=22-381"/>
</dbReference>
<dbReference type="PDBsum" id="1XHG"/>
<dbReference type="PDBsum" id="1XRV"/>
<dbReference type="PDBsum" id="1ZB5"/>
<dbReference type="PDBsum" id="1ZBC"/>
<dbReference type="SMR" id="Q29411"/>
<dbReference type="FunCoup" id="Q29411">
    <property type="interactions" value="136"/>
</dbReference>
<dbReference type="STRING" id="9823.ENSSSCP00000057083"/>
<dbReference type="CAZy" id="GH18">
    <property type="family name" value="Glycoside Hydrolase Family 18"/>
</dbReference>
<dbReference type="GlyCosmos" id="Q29411">
    <property type="glycosylation" value="1 site, No reported glycans"/>
</dbReference>
<dbReference type="GlyGen" id="Q29411">
    <property type="glycosylation" value="1 site"/>
</dbReference>
<dbReference type="iPTMnet" id="Q29411"/>
<dbReference type="PaxDb" id="9823-ENSSSCP00000016408"/>
<dbReference type="GeneID" id="396865"/>
<dbReference type="KEGG" id="ssc:396865"/>
<dbReference type="CTD" id="1116"/>
<dbReference type="eggNOG" id="KOG2806">
    <property type="taxonomic scope" value="Eukaryota"/>
</dbReference>
<dbReference type="InParanoid" id="Q29411"/>
<dbReference type="OrthoDB" id="76388at2759"/>
<dbReference type="EvolutionaryTrace" id="Q29411"/>
<dbReference type="Proteomes" id="UP000008227">
    <property type="component" value="Unplaced"/>
</dbReference>
<dbReference type="Proteomes" id="UP000314985">
    <property type="component" value="Unplaced"/>
</dbReference>
<dbReference type="Proteomes" id="UP000694570">
    <property type="component" value="Unplaced"/>
</dbReference>
<dbReference type="Proteomes" id="UP000694571">
    <property type="component" value="Unplaced"/>
</dbReference>
<dbReference type="Proteomes" id="UP000694720">
    <property type="component" value="Unplaced"/>
</dbReference>
<dbReference type="Proteomes" id="UP000694722">
    <property type="component" value="Unplaced"/>
</dbReference>
<dbReference type="Proteomes" id="UP000694723">
    <property type="component" value="Unplaced"/>
</dbReference>
<dbReference type="Proteomes" id="UP000694724">
    <property type="component" value="Unplaced"/>
</dbReference>
<dbReference type="Proteomes" id="UP000694725">
    <property type="component" value="Unplaced"/>
</dbReference>
<dbReference type="Proteomes" id="UP000694726">
    <property type="component" value="Unplaced"/>
</dbReference>
<dbReference type="Proteomes" id="UP000694727">
    <property type="component" value="Unplaced"/>
</dbReference>
<dbReference type="Proteomes" id="UP000694728">
    <property type="component" value="Unplaced"/>
</dbReference>
<dbReference type="GO" id="GO:0005737">
    <property type="term" value="C:cytoplasm"/>
    <property type="evidence" value="ECO:0000250"/>
    <property type="project" value="UniProtKB"/>
</dbReference>
<dbReference type="GO" id="GO:0005783">
    <property type="term" value="C:endoplasmic reticulum"/>
    <property type="evidence" value="ECO:0000250"/>
    <property type="project" value="UniProtKB"/>
</dbReference>
<dbReference type="GO" id="GO:0005576">
    <property type="term" value="C:extracellular region"/>
    <property type="evidence" value="ECO:0000318"/>
    <property type="project" value="GO_Central"/>
</dbReference>
<dbReference type="GO" id="GO:0005615">
    <property type="term" value="C:extracellular space"/>
    <property type="evidence" value="ECO:0000250"/>
    <property type="project" value="UniProtKB"/>
</dbReference>
<dbReference type="GO" id="GO:0048471">
    <property type="term" value="C:perinuclear region of cytoplasm"/>
    <property type="evidence" value="ECO:0007669"/>
    <property type="project" value="UniProtKB-SubCell"/>
</dbReference>
<dbReference type="GO" id="GO:0030246">
    <property type="term" value="F:carbohydrate binding"/>
    <property type="evidence" value="ECO:0007669"/>
    <property type="project" value="UniProtKB-KW"/>
</dbReference>
<dbReference type="GO" id="GO:0008061">
    <property type="term" value="F:chitin binding"/>
    <property type="evidence" value="ECO:0000250"/>
    <property type="project" value="UniProtKB"/>
</dbReference>
<dbReference type="GO" id="GO:0007250">
    <property type="term" value="P:activation of NF-kappaB-inducing kinase activity"/>
    <property type="evidence" value="ECO:0000250"/>
    <property type="project" value="UniProtKB"/>
</dbReference>
<dbReference type="GO" id="GO:0006915">
    <property type="term" value="P:apoptotic process"/>
    <property type="evidence" value="ECO:0007669"/>
    <property type="project" value="UniProtKB-KW"/>
</dbReference>
<dbReference type="GO" id="GO:0005975">
    <property type="term" value="P:carbohydrate metabolic process"/>
    <property type="evidence" value="ECO:0007669"/>
    <property type="project" value="InterPro"/>
</dbReference>
<dbReference type="GO" id="GO:0071356">
    <property type="term" value="P:cellular response to tumor necrosis factor"/>
    <property type="evidence" value="ECO:0000250"/>
    <property type="project" value="UniProtKB"/>
</dbReference>
<dbReference type="GO" id="GO:0006032">
    <property type="term" value="P:chitin catabolic process"/>
    <property type="evidence" value="ECO:0000318"/>
    <property type="project" value="GO_Central"/>
</dbReference>
<dbReference type="GO" id="GO:0006954">
    <property type="term" value="P:inflammatory response"/>
    <property type="evidence" value="ECO:0000250"/>
    <property type="project" value="UniProtKB"/>
</dbReference>
<dbReference type="GO" id="GO:0030324">
    <property type="term" value="P:lung development"/>
    <property type="evidence" value="ECO:0000250"/>
    <property type="project" value="UniProtKB"/>
</dbReference>
<dbReference type="GO" id="GO:0045766">
    <property type="term" value="P:positive regulation of angiogenesis"/>
    <property type="evidence" value="ECO:0000250"/>
    <property type="project" value="UniProtKB"/>
</dbReference>
<dbReference type="GO" id="GO:0070374">
    <property type="term" value="P:positive regulation of ERK1 and ERK2 cascade"/>
    <property type="evidence" value="ECO:0000250"/>
    <property type="project" value="UniProtKB"/>
</dbReference>
<dbReference type="GO" id="GO:0032757">
    <property type="term" value="P:positive regulation of interleukin-8 production"/>
    <property type="evidence" value="ECO:0000250"/>
    <property type="project" value="UniProtKB"/>
</dbReference>
<dbReference type="GO" id="GO:0010800">
    <property type="term" value="P:positive regulation of peptidyl-threonine phosphorylation"/>
    <property type="evidence" value="ECO:0000250"/>
    <property type="project" value="UniProtKB"/>
</dbReference>
<dbReference type="GO" id="GO:0051897">
    <property type="term" value="P:positive regulation of phosphatidylinositol 3-kinase/protein kinase B signal transduction"/>
    <property type="evidence" value="ECO:0000250"/>
    <property type="project" value="UniProtKB"/>
</dbReference>
<dbReference type="GO" id="GO:0070555">
    <property type="term" value="P:response to interleukin-1"/>
    <property type="evidence" value="ECO:0000250"/>
    <property type="project" value="UniProtKB"/>
</dbReference>
<dbReference type="GO" id="GO:0070741">
    <property type="term" value="P:response to interleukin-6"/>
    <property type="evidence" value="ECO:0000250"/>
    <property type="project" value="UniProtKB"/>
</dbReference>
<dbReference type="GO" id="GO:0009612">
    <property type="term" value="P:response to mechanical stimulus"/>
    <property type="evidence" value="ECO:0000250"/>
    <property type="project" value="UniProtKB"/>
</dbReference>
<dbReference type="GO" id="GO:0034612">
    <property type="term" value="P:response to tumor necrosis factor"/>
    <property type="evidence" value="ECO:0000250"/>
    <property type="project" value="UniProtKB"/>
</dbReference>
<dbReference type="CDD" id="cd02872">
    <property type="entry name" value="GH18_chitolectin_chitotriosidase"/>
    <property type="match status" value="1"/>
</dbReference>
<dbReference type="FunFam" id="3.10.50.10:FF:000001">
    <property type="entry name" value="Chitinase 3-like 1"/>
    <property type="match status" value="1"/>
</dbReference>
<dbReference type="FunFam" id="3.20.20.80:FF:000047">
    <property type="entry name" value="Chitinase-3-like protein 1"/>
    <property type="match status" value="1"/>
</dbReference>
<dbReference type="Gene3D" id="3.10.50.10">
    <property type="match status" value="1"/>
</dbReference>
<dbReference type="Gene3D" id="3.20.20.80">
    <property type="entry name" value="Glycosidases"/>
    <property type="match status" value="1"/>
</dbReference>
<dbReference type="InterPro" id="IPR011583">
    <property type="entry name" value="Chitinase_II/V-like_cat"/>
</dbReference>
<dbReference type="InterPro" id="IPR029070">
    <property type="entry name" value="Chitinase_insertion_sf"/>
</dbReference>
<dbReference type="InterPro" id="IPR001223">
    <property type="entry name" value="Glyco_hydro18_cat"/>
</dbReference>
<dbReference type="InterPro" id="IPR017853">
    <property type="entry name" value="Glycoside_hydrolase_SF"/>
</dbReference>
<dbReference type="InterPro" id="IPR050314">
    <property type="entry name" value="Glycosyl_Hydrlase_18"/>
</dbReference>
<dbReference type="PANTHER" id="PTHR11177">
    <property type="entry name" value="CHITINASE"/>
    <property type="match status" value="1"/>
</dbReference>
<dbReference type="PANTHER" id="PTHR11177:SF202">
    <property type="entry name" value="CHITINASE-3-LIKE PROTEIN 1"/>
    <property type="match status" value="1"/>
</dbReference>
<dbReference type="Pfam" id="PF00704">
    <property type="entry name" value="Glyco_hydro_18"/>
    <property type="match status" value="1"/>
</dbReference>
<dbReference type="SMART" id="SM00636">
    <property type="entry name" value="Glyco_18"/>
    <property type="match status" value="1"/>
</dbReference>
<dbReference type="SUPFAM" id="SSF51445">
    <property type="entry name" value="(Trans)glycosidases"/>
    <property type="match status" value="1"/>
</dbReference>
<dbReference type="SUPFAM" id="SSF54556">
    <property type="entry name" value="Chitinase insertion domain"/>
    <property type="match status" value="1"/>
</dbReference>
<dbReference type="PROSITE" id="PS51910">
    <property type="entry name" value="GH18_2"/>
    <property type="match status" value="1"/>
</dbReference>